<protein>
    <recommendedName>
        <fullName evidence="1">Catalase-peroxidase</fullName>
        <shortName evidence="1">CP</shortName>
        <ecNumber evidence="1">1.11.1.21</ecNumber>
    </recommendedName>
    <alternativeName>
        <fullName evidence="1">Peroxidase/catalase</fullName>
    </alternativeName>
</protein>
<proteinExistence type="inferred from homology"/>
<reference key="1">
    <citation type="submission" date="2002-03" db="EMBL/GenBank/DDBJ databases">
        <authorList>
            <person name="Williams H.D."/>
        </authorList>
    </citation>
    <scope>NUCLEOTIDE SEQUENCE [GENOMIC DNA]</scope>
    <source>
        <strain>4292</strain>
    </source>
</reference>
<comment type="function">
    <text evidence="1">Bifunctional enzyme with both catalase and broad-spectrum peroxidase activity.</text>
</comment>
<comment type="catalytic activity">
    <reaction evidence="1">
        <text>H2O2 + AH2 = A + 2 H2O</text>
        <dbReference type="Rhea" id="RHEA:30275"/>
        <dbReference type="ChEBI" id="CHEBI:13193"/>
        <dbReference type="ChEBI" id="CHEBI:15377"/>
        <dbReference type="ChEBI" id="CHEBI:16240"/>
        <dbReference type="ChEBI" id="CHEBI:17499"/>
        <dbReference type="EC" id="1.11.1.21"/>
    </reaction>
</comment>
<comment type="catalytic activity">
    <reaction evidence="1">
        <text>2 H2O2 = O2 + 2 H2O</text>
        <dbReference type="Rhea" id="RHEA:20309"/>
        <dbReference type="ChEBI" id="CHEBI:15377"/>
        <dbReference type="ChEBI" id="CHEBI:15379"/>
        <dbReference type="ChEBI" id="CHEBI:16240"/>
        <dbReference type="EC" id="1.11.1.21"/>
    </reaction>
</comment>
<comment type="cofactor">
    <cofactor evidence="1">
        <name>heme b</name>
        <dbReference type="ChEBI" id="CHEBI:60344"/>
    </cofactor>
    <text evidence="1">Binds 1 heme b (iron(II)-protoporphyrin IX) group per dimer.</text>
</comment>
<comment type="subunit">
    <text evidence="1">Homodimer or homotetramer.</text>
</comment>
<comment type="PTM">
    <text evidence="1">Formation of the three residue Trp-Tyr-Met cross-link is important for the catalase, but not the peroxidase activity of the enzyme.</text>
</comment>
<comment type="similarity">
    <text evidence="1">Belongs to the peroxidase family. Peroxidase/catalase subfamily.</text>
</comment>
<keyword id="KW-0349">Heme</keyword>
<keyword id="KW-0376">Hydrogen peroxide</keyword>
<keyword id="KW-0408">Iron</keyword>
<keyword id="KW-0479">Metal-binding</keyword>
<keyword id="KW-0560">Oxidoreductase</keyword>
<keyword id="KW-0575">Peroxidase</keyword>
<keyword id="KW-0732">Signal</keyword>
<evidence type="ECO:0000255" key="1">
    <source>
        <dbReference type="HAMAP-Rule" id="MF_01961"/>
    </source>
</evidence>
<evidence type="ECO:0000256" key="2">
    <source>
        <dbReference type="SAM" id="MobiDB-lite"/>
    </source>
</evidence>
<dbReference type="EC" id="1.11.1.21" evidence="1"/>
<dbReference type="EMBL" id="AJ438039">
    <property type="protein sequence ID" value="CAD27228.1"/>
    <property type="molecule type" value="Genomic_DNA"/>
</dbReference>
<dbReference type="SMR" id="Q8RJZ6"/>
<dbReference type="PeroxiBase" id="2354">
    <property type="entry name" value="RleCP01"/>
</dbReference>
<dbReference type="GO" id="GO:0005829">
    <property type="term" value="C:cytosol"/>
    <property type="evidence" value="ECO:0007669"/>
    <property type="project" value="TreeGrafter"/>
</dbReference>
<dbReference type="GO" id="GO:0004096">
    <property type="term" value="F:catalase activity"/>
    <property type="evidence" value="ECO:0007669"/>
    <property type="project" value="UniProtKB-UniRule"/>
</dbReference>
<dbReference type="GO" id="GO:0020037">
    <property type="term" value="F:heme binding"/>
    <property type="evidence" value="ECO:0007669"/>
    <property type="project" value="InterPro"/>
</dbReference>
<dbReference type="GO" id="GO:0046872">
    <property type="term" value="F:metal ion binding"/>
    <property type="evidence" value="ECO:0007669"/>
    <property type="project" value="UniProtKB-KW"/>
</dbReference>
<dbReference type="GO" id="GO:0070301">
    <property type="term" value="P:cellular response to hydrogen peroxide"/>
    <property type="evidence" value="ECO:0007669"/>
    <property type="project" value="TreeGrafter"/>
</dbReference>
<dbReference type="GO" id="GO:0042744">
    <property type="term" value="P:hydrogen peroxide catabolic process"/>
    <property type="evidence" value="ECO:0007669"/>
    <property type="project" value="UniProtKB-KW"/>
</dbReference>
<dbReference type="CDD" id="cd00649">
    <property type="entry name" value="catalase_peroxidase_1"/>
    <property type="match status" value="1"/>
</dbReference>
<dbReference type="CDD" id="cd08200">
    <property type="entry name" value="catalase_peroxidase_2"/>
    <property type="match status" value="1"/>
</dbReference>
<dbReference type="FunFam" id="1.10.420.10:FF:000002">
    <property type="entry name" value="Catalase-peroxidase"/>
    <property type="match status" value="1"/>
</dbReference>
<dbReference type="FunFam" id="1.10.420.10:FF:000004">
    <property type="entry name" value="Catalase-peroxidase"/>
    <property type="match status" value="1"/>
</dbReference>
<dbReference type="FunFam" id="1.10.520.10:FF:000002">
    <property type="entry name" value="Catalase-peroxidase"/>
    <property type="match status" value="1"/>
</dbReference>
<dbReference type="Gene3D" id="1.10.520.10">
    <property type="match status" value="2"/>
</dbReference>
<dbReference type="Gene3D" id="1.10.420.10">
    <property type="entry name" value="Peroxidase, domain 2"/>
    <property type="match status" value="2"/>
</dbReference>
<dbReference type="HAMAP" id="MF_01961">
    <property type="entry name" value="Catal_peroxid"/>
    <property type="match status" value="1"/>
</dbReference>
<dbReference type="InterPro" id="IPR000763">
    <property type="entry name" value="Catalase_peroxidase"/>
</dbReference>
<dbReference type="InterPro" id="IPR002016">
    <property type="entry name" value="Haem_peroxidase"/>
</dbReference>
<dbReference type="InterPro" id="IPR010255">
    <property type="entry name" value="Haem_peroxidase_sf"/>
</dbReference>
<dbReference type="InterPro" id="IPR019794">
    <property type="entry name" value="Peroxidases_AS"/>
</dbReference>
<dbReference type="InterPro" id="IPR019793">
    <property type="entry name" value="Peroxidases_heam-ligand_BS"/>
</dbReference>
<dbReference type="NCBIfam" id="TIGR00198">
    <property type="entry name" value="cat_per_HPI"/>
    <property type="match status" value="1"/>
</dbReference>
<dbReference type="NCBIfam" id="NF011635">
    <property type="entry name" value="PRK15061.1"/>
    <property type="match status" value="1"/>
</dbReference>
<dbReference type="PANTHER" id="PTHR30555:SF0">
    <property type="entry name" value="CATALASE-PEROXIDASE"/>
    <property type="match status" value="1"/>
</dbReference>
<dbReference type="PANTHER" id="PTHR30555">
    <property type="entry name" value="HYDROPEROXIDASE I, BIFUNCTIONAL CATALASE-PEROXIDASE"/>
    <property type="match status" value="1"/>
</dbReference>
<dbReference type="Pfam" id="PF00141">
    <property type="entry name" value="peroxidase"/>
    <property type="match status" value="2"/>
</dbReference>
<dbReference type="PRINTS" id="PR00460">
    <property type="entry name" value="BPEROXIDASE"/>
</dbReference>
<dbReference type="PRINTS" id="PR00458">
    <property type="entry name" value="PEROXIDASE"/>
</dbReference>
<dbReference type="SUPFAM" id="SSF48113">
    <property type="entry name" value="Heme-dependent peroxidases"/>
    <property type="match status" value="2"/>
</dbReference>
<dbReference type="PROSITE" id="PS00435">
    <property type="entry name" value="PEROXIDASE_1"/>
    <property type="match status" value="1"/>
</dbReference>
<dbReference type="PROSITE" id="PS00436">
    <property type="entry name" value="PEROXIDASE_2"/>
    <property type="match status" value="1"/>
</dbReference>
<dbReference type="PROSITE" id="PS50873">
    <property type="entry name" value="PEROXIDASE_4"/>
    <property type="match status" value="1"/>
</dbReference>
<gene>
    <name evidence="1" type="primary">katG</name>
</gene>
<organism>
    <name type="scientific">Rhizobium leguminosarum bv. phaseoli</name>
    <dbReference type="NCBI Taxonomy" id="385"/>
    <lineage>
        <taxon>Bacteria</taxon>
        <taxon>Pseudomonadati</taxon>
        <taxon>Pseudomonadota</taxon>
        <taxon>Alphaproteobacteria</taxon>
        <taxon>Hyphomicrobiales</taxon>
        <taxon>Rhizobiaceae</taxon>
        <taxon>Rhizobium/Agrobacterium group</taxon>
        <taxon>Rhizobium</taxon>
    </lineage>
</organism>
<feature type="signal peptide" evidence="1">
    <location>
        <begin position="1"/>
        <end position="16"/>
    </location>
</feature>
<feature type="chain" id="PRO_0000354884" description="Catalase-peroxidase">
    <location>
        <begin position="17"/>
        <end position="728"/>
    </location>
</feature>
<feature type="region of interest" description="Disordered" evidence="2">
    <location>
        <begin position="1"/>
        <end position="26"/>
    </location>
</feature>
<feature type="active site" description="Proton acceptor" evidence="1">
    <location>
        <position position="97"/>
    </location>
</feature>
<feature type="binding site" description="axial binding residue" evidence="1">
    <location>
        <position position="259"/>
    </location>
    <ligand>
        <name>heme b</name>
        <dbReference type="ChEBI" id="CHEBI:60344"/>
    </ligand>
    <ligandPart>
        <name>Fe</name>
        <dbReference type="ChEBI" id="CHEBI:18248"/>
    </ligandPart>
</feature>
<feature type="site" description="Transition state stabilizer" evidence="1">
    <location>
        <position position="93"/>
    </location>
</feature>
<feature type="cross-link" description="Tryptophyl-tyrosyl-methioninium (Trp-Tyr) (with M-244)" evidence="1">
    <location>
        <begin position="96"/>
        <end position="218"/>
    </location>
</feature>
<feature type="cross-link" description="Tryptophyl-tyrosyl-methioninium (Tyr-Met) (with W-96)" evidence="1">
    <location>
        <begin position="218"/>
        <end position="244"/>
    </location>
</feature>
<name>KATG_RHILP</name>
<accession>Q8RJZ6</accession>
<sequence>MDNPTDSAGKCPVAHGNTPRSRSNRDWWPDQLNVQILHHNSGRADPLGQAFDYAEEFKKLHLHGLKKDLHALMTDSQDWWPADFGHYGGLFIRMAWHSAGTYRITDGRGGAGQGQQRFAPLNSWPDNANLDKARRLLWPIKQKYGNRISWADLLILTGNVALESMGFKTFGFAGGRADVWEPEELFWGPEGTWLGDERYSGERELAEPLGAVQMGFIYVNPEGPNGNSDPLASARDIRETFARMAMNDEETVALIAGGHTFGKKHGAGEPFLIGPEPEGGAIEDQGLGWKSSFGTGVGKDAITAGLEVTWSQTPTKWSNYFFENLFAFEWELTTSPAGAKQWQAKNAEASIPDAYDASKRHLPTMLTSDLALRFDPTYEKISRHFLENPGEFADAFARAWFKLTHRDMGPKVRYLGPEVPAEDLIWQDVIPAVDHPLVDDKDIAELKEKVLATGLTVQELVSTAWASASTFRGSDKRGGANGARVRLAPQKDWDANQPAQLAKVLGVLESIQKDFNAAQTGAKKISLADLIVLAGAAGVEKAAAAGGNAVSVPFTPGRIDASEAQTDAHSFAALEPRIDGFRNYLNGKRHQFMKPEEALVDRAQLLTLTGPEMTALVGGLRVLKAGAPEHGVFTSRPETLTNDFFVNLLDMGTQWVPVAGKEGFYEGRDRKTGAAKWTGTRVDLIFGSHSQLRAFAEVYGQADAKGKFVNDFVAAWNKVMNADRFDLV</sequence>